<gene>
    <name evidence="1" type="primary">speD</name>
    <name type="ordered locus">KPK_4612</name>
</gene>
<name>SPED_KLEP3</name>
<reference key="1">
    <citation type="journal article" date="2008" name="PLoS Genet.">
        <title>Complete genome sequence of the N2-fixing broad host range endophyte Klebsiella pneumoniae 342 and virulence predictions verified in mice.</title>
        <authorList>
            <person name="Fouts D.E."/>
            <person name="Tyler H.L."/>
            <person name="DeBoy R.T."/>
            <person name="Daugherty S."/>
            <person name="Ren Q."/>
            <person name="Badger J.H."/>
            <person name="Durkin A.S."/>
            <person name="Huot H."/>
            <person name="Shrivastava S."/>
            <person name="Kothari S."/>
            <person name="Dodson R.J."/>
            <person name="Mohamoud Y."/>
            <person name="Khouri H."/>
            <person name="Roesch L.F.W."/>
            <person name="Krogfelt K.A."/>
            <person name="Struve C."/>
            <person name="Triplett E.W."/>
            <person name="Methe B.A."/>
        </authorList>
    </citation>
    <scope>NUCLEOTIDE SEQUENCE [LARGE SCALE GENOMIC DNA]</scope>
    <source>
        <strain>342</strain>
    </source>
</reference>
<evidence type="ECO:0000255" key="1">
    <source>
        <dbReference type="HAMAP-Rule" id="MF_00465"/>
    </source>
</evidence>
<organism>
    <name type="scientific">Klebsiella pneumoniae (strain 342)</name>
    <dbReference type="NCBI Taxonomy" id="507522"/>
    <lineage>
        <taxon>Bacteria</taxon>
        <taxon>Pseudomonadati</taxon>
        <taxon>Pseudomonadota</taxon>
        <taxon>Gammaproteobacteria</taxon>
        <taxon>Enterobacterales</taxon>
        <taxon>Enterobacteriaceae</taxon>
        <taxon>Klebsiella/Raoultella group</taxon>
        <taxon>Klebsiella</taxon>
        <taxon>Klebsiella pneumoniae complex</taxon>
    </lineage>
</organism>
<dbReference type="EC" id="4.1.1.50" evidence="1"/>
<dbReference type="EMBL" id="CP000964">
    <property type="protein sequence ID" value="ACI10192.1"/>
    <property type="molecule type" value="Genomic_DNA"/>
</dbReference>
<dbReference type="KEGG" id="kpe:KPK_4612"/>
<dbReference type="HOGENOM" id="CLU_092007_0_0_6"/>
<dbReference type="UniPathway" id="UPA00331">
    <property type="reaction ID" value="UER00451"/>
</dbReference>
<dbReference type="Proteomes" id="UP000001734">
    <property type="component" value="Chromosome"/>
</dbReference>
<dbReference type="GO" id="GO:0005829">
    <property type="term" value="C:cytosol"/>
    <property type="evidence" value="ECO:0007669"/>
    <property type="project" value="TreeGrafter"/>
</dbReference>
<dbReference type="GO" id="GO:0004014">
    <property type="term" value="F:adenosylmethionine decarboxylase activity"/>
    <property type="evidence" value="ECO:0007669"/>
    <property type="project" value="UniProtKB-UniRule"/>
</dbReference>
<dbReference type="GO" id="GO:0008295">
    <property type="term" value="P:spermidine biosynthetic process"/>
    <property type="evidence" value="ECO:0007669"/>
    <property type="project" value="UniProtKB-UniRule"/>
</dbReference>
<dbReference type="FunFam" id="3.60.90.10:FF:000001">
    <property type="entry name" value="S-adenosylmethionine decarboxylase proenzyme"/>
    <property type="match status" value="1"/>
</dbReference>
<dbReference type="Gene3D" id="3.60.90.10">
    <property type="entry name" value="S-adenosylmethionine decarboxylase"/>
    <property type="match status" value="1"/>
</dbReference>
<dbReference type="HAMAP" id="MF_00465">
    <property type="entry name" value="AdoMetDC_2"/>
    <property type="match status" value="1"/>
</dbReference>
<dbReference type="InterPro" id="IPR003826">
    <property type="entry name" value="AdoMetDC_fam_prok"/>
</dbReference>
<dbReference type="InterPro" id="IPR009165">
    <property type="entry name" value="S-AdoMet_deCO2ase_bac"/>
</dbReference>
<dbReference type="InterPro" id="IPR016067">
    <property type="entry name" value="S-AdoMet_deCO2ase_core"/>
</dbReference>
<dbReference type="NCBIfam" id="TIGR03331">
    <property type="entry name" value="SAM_DCase_Eco"/>
    <property type="match status" value="1"/>
</dbReference>
<dbReference type="PANTHER" id="PTHR33866">
    <property type="entry name" value="S-ADENOSYLMETHIONINE DECARBOXYLASE PROENZYME"/>
    <property type="match status" value="1"/>
</dbReference>
<dbReference type="PANTHER" id="PTHR33866:SF1">
    <property type="entry name" value="S-ADENOSYLMETHIONINE DECARBOXYLASE PROENZYME"/>
    <property type="match status" value="1"/>
</dbReference>
<dbReference type="Pfam" id="PF02675">
    <property type="entry name" value="AdoMet_dc"/>
    <property type="match status" value="1"/>
</dbReference>
<dbReference type="PIRSF" id="PIRSF001356">
    <property type="entry name" value="SAM_decarboxylas"/>
    <property type="match status" value="1"/>
</dbReference>
<dbReference type="SUPFAM" id="SSF56276">
    <property type="entry name" value="S-adenosylmethionine decarboxylase"/>
    <property type="match status" value="1"/>
</dbReference>
<comment type="function">
    <text evidence="1">Catalyzes the decarboxylation of S-adenosylmethionine to S-adenosylmethioninamine (dcAdoMet), the propylamine donor required for the synthesis of the polyamines spermine and spermidine from the diamine putrescine.</text>
</comment>
<comment type="catalytic activity">
    <reaction evidence="1">
        <text>S-adenosyl-L-methionine + H(+) = S-adenosyl 3-(methylsulfanyl)propylamine + CO2</text>
        <dbReference type="Rhea" id="RHEA:15981"/>
        <dbReference type="ChEBI" id="CHEBI:15378"/>
        <dbReference type="ChEBI" id="CHEBI:16526"/>
        <dbReference type="ChEBI" id="CHEBI:57443"/>
        <dbReference type="ChEBI" id="CHEBI:59789"/>
        <dbReference type="EC" id="4.1.1.50"/>
    </reaction>
</comment>
<comment type="cofactor">
    <cofactor evidence="1">
        <name>pyruvate</name>
        <dbReference type="ChEBI" id="CHEBI:15361"/>
    </cofactor>
    <text evidence="1">Binds 1 pyruvoyl group covalently per subunit.</text>
</comment>
<comment type="pathway">
    <text evidence="1">Amine and polyamine biosynthesis; S-adenosylmethioninamine biosynthesis; S-adenosylmethioninamine from S-adenosyl-L-methionine: step 1/1.</text>
</comment>
<comment type="subunit">
    <text evidence="1">Heterooctamer of four alpha and four beta chains arranged as a tetramer of alpha/beta heterodimers.</text>
</comment>
<comment type="PTM">
    <text evidence="1">Is synthesized initially as an inactive proenzyme. Formation of the active enzyme involves a self-maturation process in which the active site pyruvoyl group is generated from an internal serine residue via an autocatalytic post-translational modification. Two non-identical subunits are generated from the proenzyme in this reaction, and the pyruvate is formed at the N-terminus of the alpha chain, which is derived from the carboxyl end of the proenzyme. The post-translation cleavage follows an unusual pathway, termed non-hydrolytic serinolysis, in which the side chain hydroxyl group of the serine supplies its oxygen atom to form the C-terminus of the beta chain, while the remainder of the serine residue undergoes an oxidative deamination to produce ammonia and the pyruvoyl group blocking the N-terminus of the alpha chain.</text>
</comment>
<comment type="similarity">
    <text evidence="1">Belongs to the prokaryotic AdoMetDC family. Type 2 subfamily.</text>
</comment>
<keyword id="KW-0068">Autocatalytic cleavage</keyword>
<keyword id="KW-0210">Decarboxylase</keyword>
<keyword id="KW-0456">Lyase</keyword>
<keyword id="KW-0620">Polyamine biosynthesis</keyword>
<keyword id="KW-0670">Pyruvate</keyword>
<keyword id="KW-0949">S-adenosyl-L-methionine</keyword>
<keyword id="KW-0704">Schiff base</keyword>
<keyword id="KW-0745">Spermidine biosynthesis</keyword>
<keyword id="KW-0865">Zymogen</keyword>
<sequence length="264" mass="30475">MKKLKLHGFNNLTKSLSFCIYDICYAKTAEERDGYIAYIDELYNANRLTEILTETCSIIGANILNIARQDYEPQGASVTILVSEEPVDPKLIDQTEHPGPLPETVVAHLDKSHICVHTYPESHPEGGLCTFRADIEVSTCGVISPLKALNYLIHQLESDIVTIDYRVRGFTRDINGMKHFIDHEINSIQNFMSDDIKSLYDMVDVNVYQENIFHTKMLLKEFDLKHYMFHTRPEELTAEERKVITDLLWKEMREIYYGRNIPAV</sequence>
<feature type="chain" id="PRO_0000364387" description="S-adenosylmethionine decarboxylase beta chain" evidence="1">
    <location>
        <begin position="1"/>
        <end position="111"/>
    </location>
</feature>
<feature type="chain" id="PRO_0000364388" description="S-adenosylmethionine decarboxylase alpha chain" evidence="1">
    <location>
        <begin position="112"/>
        <end position="264"/>
    </location>
</feature>
<feature type="active site" description="Schiff-base intermediate with substrate; via pyruvic acid" evidence="1">
    <location>
        <position position="112"/>
    </location>
</feature>
<feature type="active site" description="Proton acceptor; for processing activity" evidence="1">
    <location>
        <position position="117"/>
    </location>
</feature>
<feature type="active site" description="Proton donor; for catalytic activity" evidence="1">
    <location>
        <position position="140"/>
    </location>
</feature>
<feature type="site" description="Cleavage (non-hydrolytic); by autolysis" evidence="1">
    <location>
        <begin position="111"/>
        <end position="112"/>
    </location>
</feature>
<feature type="modified residue" description="Pyruvic acid (Ser); by autocatalysis" evidence="1">
    <location>
        <position position="112"/>
    </location>
</feature>
<accession>B5Y1R2</accession>
<protein>
    <recommendedName>
        <fullName evidence="1">S-adenosylmethionine decarboxylase proenzyme</fullName>
        <shortName evidence="1">AdoMetDC</shortName>
        <shortName evidence="1">SAMDC</shortName>
        <ecNumber evidence="1">4.1.1.50</ecNumber>
    </recommendedName>
    <component>
        <recommendedName>
            <fullName evidence="1">S-adenosylmethionine decarboxylase beta chain</fullName>
        </recommendedName>
    </component>
    <component>
        <recommendedName>
            <fullName evidence="1">S-adenosylmethionine decarboxylase alpha chain</fullName>
        </recommendedName>
    </component>
</protein>
<proteinExistence type="inferred from homology"/>